<comment type="catalytic activity">
    <reaction>
        <text>sulfate + ATP + H(+) = adenosine 5'-phosphosulfate + diphosphate</text>
        <dbReference type="Rhea" id="RHEA:18133"/>
        <dbReference type="ChEBI" id="CHEBI:15378"/>
        <dbReference type="ChEBI" id="CHEBI:16189"/>
        <dbReference type="ChEBI" id="CHEBI:30616"/>
        <dbReference type="ChEBI" id="CHEBI:33019"/>
        <dbReference type="ChEBI" id="CHEBI:58243"/>
        <dbReference type="EC" id="2.7.7.4"/>
    </reaction>
</comment>
<comment type="pathway">
    <text>Sulfur metabolism; hydrogen sulfide biosynthesis; sulfite from sulfate: step 1/3.</text>
</comment>
<comment type="similarity">
    <text evidence="1">Belongs to the sulfate adenylyltransferase family.</text>
</comment>
<dbReference type="EC" id="2.7.7.4"/>
<dbReference type="EMBL" id="AE001825">
    <property type="protein sequence ID" value="AAF12284.1"/>
    <property type="molecule type" value="Genomic_DNA"/>
</dbReference>
<dbReference type="PIR" id="D75594">
    <property type="entry name" value="D75594"/>
</dbReference>
<dbReference type="RefSeq" id="NP_285340.1">
    <property type="nucleotide sequence ID" value="NC_001264.1"/>
</dbReference>
<dbReference type="RefSeq" id="WP_010889276.1">
    <property type="nucleotide sequence ID" value="NC_001264.1"/>
</dbReference>
<dbReference type="SMR" id="P56864"/>
<dbReference type="FunCoup" id="P56864">
    <property type="interactions" value="313"/>
</dbReference>
<dbReference type="STRING" id="243230.DR_A0016"/>
<dbReference type="PaxDb" id="243230-DR_A0016"/>
<dbReference type="EnsemblBacteria" id="AAF12284">
    <property type="protein sequence ID" value="AAF12284"/>
    <property type="gene ID" value="DR_A0016"/>
</dbReference>
<dbReference type="GeneID" id="69518909"/>
<dbReference type="KEGG" id="dra:DR_A0016"/>
<dbReference type="PATRIC" id="fig|243230.17.peg.2902"/>
<dbReference type="eggNOG" id="COG2046">
    <property type="taxonomic scope" value="Bacteria"/>
</dbReference>
<dbReference type="HOGENOM" id="CLU_022950_1_1_0"/>
<dbReference type="InParanoid" id="P56864"/>
<dbReference type="OrthoDB" id="9804504at2"/>
<dbReference type="UniPathway" id="UPA00140">
    <property type="reaction ID" value="UER00204"/>
</dbReference>
<dbReference type="Proteomes" id="UP000002524">
    <property type="component" value="Chromosome 2"/>
</dbReference>
<dbReference type="GO" id="GO:0005524">
    <property type="term" value="F:ATP binding"/>
    <property type="evidence" value="ECO:0007669"/>
    <property type="project" value="UniProtKB-KW"/>
</dbReference>
<dbReference type="GO" id="GO:0004781">
    <property type="term" value="F:sulfate adenylyltransferase (ATP) activity"/>
    <property type="evidence" value="ECO:0007669"/>
    <property type="project" value="UniProtKB-UniRule"/>
</dbReference>
<dbReference type="GO" id="GO:0070814">
    <property type="term" value="P:hydrogen sulfide biosynthetic process"/>
    <property type="evidence" value="ECO:0007669"/>
    <property type="project" value="UniProtKB-UniRule"/>
</dbReference>
<dbReference type="GO" id="GO:0000103">
    <property type="term" value="P:sulfate assimilation"/>
    <property type="evidence" value="ECO:0007669"/>
    <property type="project" value="UniProtKB-UniRule"/>
</dbReference>
<dbReference type="CDD" id="cd00517">
    <property type="entry name" value="ATPS"/>
    <property type="match status" value="1"/>
</dbReference>
<dbReference type="Gene3D" id="3.40.50.620">
    <property type="entry name" value="HUPs"/>
    <property type="match status" value="1"/>
</dbReference>
<dbReference type="Gene3D" id="3.10.400.10">
    <property type="entry name" value="Sulfate adenylyltransferase"/>
    <property type="match status" value="1"/>
</dbReference>
<dbReference type="HAMAP" id="MF_00066">
    <property type="entry name" value="Sulf_adenylyltr"/>
    <property type="match status" value="1"/>
</dbReference>
<dbReference type="InterPro" id="IPR025980">
    <property type="entry name" value="ATP-Sase_PUA-like_dom"/>
</dbReference>
<dbReference type="InterPro" id="IPR015947">
    <property type="entry name" value="PUA-like_sf"/>
</dbReference>
<dbReference type="InterPro" id="IPR014729">
    <property type="entry name" value="Rossmann-like_a/b/a_fold"/>
</dbReference>
<dbReference type="InterPro" id="IPR020792">
    <property type="entry name" value="SO4_adenylyltransferase_pro"/>
</dbReference>
<dbReference type="InterPro" id="IPR024951">
    <property type="entry name" value="Sulfurylase_cat_dom"/>
</dbReference>
<dbReference type="InterPro" id="IPR002650">
    <property type="entry name" value="Sulphate_adenylyltransferase"/>
</dbReference>
<dbReference type="NCBIfam" id="NF003166">
    <property type="entry name" value="PRK04149.1"/>
    <property type="match status" value="1"/>
</dbReference>
<dbReference type="NCBIfam" id="TIGR00339">
    <property type="entry name" value="sopT"/>
    <property type="match status" value="1"/>
</dbReference>
<dbReference type="PANTHER" id="PTHR43509">
    <property type="match status" value="1"/>
</dbReference>
<dbReference type="PANTHER" id="PTHR43509:SF1">
    <property type="entry name" value="SULFATE ADENYLYLTRANSFERASE"/>
    <property type="match status" value="1"/>
</dbReference>
<dbReference type="Pfam" id="PF01747">
    <property type="entry name" value="ATP-sulfurylase"/>
    <property type="match status" value="1"/>
</dbReference>
<dbReference type="Pfam" id="PF14306">
    <property type="entry name" value="PUA_2"/>
    <property type="match status" value="1"/>
</dbReference>
<dbReference type="SUPFAM" id="SSF52374">
    <property type="entry name" value="Nucleotidylyl transferase"/>
    <property type="match status" value="1"/>
</dbReference>
<dbReference type="SUPFAM" id="SSF88697">
    <property type="entry name" value="PUA domain-like"/>
    <property type="match status" value="1"/>
</dbReference>
<name>SAT_DEIRA</name>
<organism>
    <name type="scientific">Deinococcus radiodurans (strain ATCC 13939 / DSM 20539 / JCM 16871 / CCUG 27074 / LMG 4051 / NBRC 15346 / NCIMB 9279 / VKM B-1422 / R1)</name>
    <dbReference type="NCBI Taxonomy" id="243230"/>
    <lineage>
        <taxon>Bacteria</taxon>
        <taxon>Thermotogati</taxon>
        <taxon>Deinococcota</taxon>
        <taxon>Deinococci</taxon>
        <taxon>Deinococcales</taxon>
        <taxon>Deinococcaceae</taxon>
        <taxon>Deinococcus</taxon>
    </lineage>
</organism>
<proteinExistence type="inferred from homology"/>
<accession>P56864</accession>
<reference key="1">
    <citation type="journal article" date="1999" name="Science">
        <title>Genome sequence of the radioresistant bacterium Deinococcus radiodurans R1.</title>
        <authorList>
            <person name="White O."/>
            <person name="Eisen J.A."/>
            <person name="Heidelberg J.F."/>
            <person name="Hickey E.K."/>
            <person name="Peterson J.D."/>
            <person name="Dodson R.J."/>
            <person name="Haft D.H."/>
            <person name="Gwinn M.L."/>
            <person name="Nelson W.C."/>
            <person name="Richardson D.L."/>
            <person name="Moffat K.S."/>
            <person name="Qin H."/>
            <person name="Jiang L."/>
            <person name="Pamphile W."/>
            <person name="Crosby M."/>
            <person name="Shen M."/>
            <person name="Vamathevan J.J."/>
            <person name="Lam P."/>
            <person name="McDonald L.A."/>
            <person name="Utterback T.R."/>
            <person name="Zalewski C."/>
            <person name="Makarova K.S."/>
            <person name="Aravind L."/>
            <person name="Daly M.J."/>
            <person name="Minton K.W."/>
            <person name="Fleischmann R.D."/>
            <person name="Ketchum K.A."/>
            <person name="Nelson K.E."/>
            <person name="Salzberg S.L."/>
            <person name="Smith H.O."/>
            <person name="Venter J.C."/>
            <person name="Fraser C.M."/>
        </authorList>
    </citation>
    <scope>NUCLEOTIDE SEQUENCE [LARGE SCALE GENOMIC DNA]</scope>
    <source>
        <strain>ATCC 13939 / DSM 20539 / JCM 16871 / CCUG 27074 / LMG 4051 / NBRC 15346 / NCIMB 9279 / VKM B-1422 / R1</strain>
    </source>
</reference>
<evidence type="ECO:0000305" key="1"/>
<keyword id="KW-0067">ATP-binding</keyword>
<keyword id="KW-0547">Nucleotide-binding</keyword>
<keyword id="KW-0548">Nucleotidyltransferase</keyword>
<keyword id="KW-1185">Reference proteome</keyword>
<keyword id="KW-0808">Transferase</keyword>
<gene>
    <name type="primary">sat</name>
    <name type="ordered locus">DR_A0016</name>
</gene>
<sequence>MTTFQTAPVTLPTPLGGSLVRRIWRPGQDFDPAELAGRPRLELSSRSLADLEMIATGAYSPLTGFVGEADYLSIIEHLRLADGTPWSLPITLPVTAEQAAGLSGRVVLTHGGEPVGTLDIEEKYAAQKSLEAREVYRTEEEAHPGVAALYAQGDVYLAGPVTLFEVPRGEFPRAHRTPAEVREVIEARGWRSTVAFQTRNPIHRAHEYLQKVALELVDGLLLHPLVGQTKGDDVPAETRMEAYEVLLRGYYPQERTLLSVYPAAMRYAGPREAIVHALSRRNYGATHFIVGRDHAGVGSYYGTYDAQEIFNTYTAEELGIRILKFEHTFYCQSCGQLVSPRTCPHDSSHHLVLSGTKVREKLRAGENLPPEFTRPEVAEVLRKAYTR</sequence>
<feature type="chain" id="PRO_0000105940" description="Sulfate adenylyltransferase">
    <location>
        <begin position="1"/>
        <end position="387"/>
    </location>
</feature>
<protein>
    <recommendedName>
        <fullName>Sulfate adenylyltransferase</fullName>
        <ecNumber>2.7.7.4</ecNumber>
    </recommendedName>
    <alternativeName>
        <fullName>ATP-sulfurylase</fullName>
    </alternativeName>
    <alternativeName>
        <fullName>Sulfate adenylate transferase</fullName>
        <shortName>SAT</shortName>
    </alternativeName>
</protein>